<gene>
    <name type="primary">alr</name>
    <name type="ordered locus">Nmul_A2115</name>
</gene>
<comment type="function">
    <text evidence="1">Catalyzes the interconversion of L-alanine and D-alanine. May also act on other amino acids.</text>
</comment>
<comment type="catalytic activity">
    <reaction evidence="1">
        <text>L-alanine = D-alanine</text>
        <dbReference type="Rhea" id="RHEA:20249"/>
        <dbReference type="ChEBI" id="CHEBI:57416"/>
        <dbReference type="ChEBI" id="CHEBI:57972"/>
        <dbReference type="EC" id="5.1.1.1"/>
    </reaction>
</comment>
<comment type="cofactor">
    <cofactor evidence="1">
        <name>pyridoxal 5'-phosphate</name>
        <dbReference type="ChEBI" id="CHEBI:597326"/>
    </cofactor>
</comment>
<comment type="pathway">
    <text evidence="1">Amino-acid biosynthesis; D-alanine biosynthesis; D-alanine from L-alanine: step 1/1.</text>
</comment>
<comment type="similarity">
    <text evidence="1">Belongs to the alanine racemase family.</text>
</comment>
<sequence length="357" mass="38865">MSRPIQALIDPAALERNLAIVRRHAPRSRVMAVIKADAYGHGLLCAAEALAEAEGFALLELDAAVRLREAGYRQTILLLEGFFDIDELSWIEQYRLSTVVHHPEQLAMLEAVRRRATLDVFLKLNSGMNRLGFTPTEFPAALEHLKANPAVRQITLMTHFACADEPDRNDSIAAQLQCFNLAAGGRYMPRSLANSAAILRFPEAHADWVRPGIMLYGSSPLAHTTAEQLGLQPAMTVSSRIISVQTLRPNDGVGYGHAFRAGSSMRVGIVAGGYADGYPRHAPTGTPVLVKGRRTRIVGRISMDMLHVDLSEIEDAGVGSPVTLWGRGMPVDEVARAAGTLGYELLCAIAPRMQRVT</sequence>
<dbReference type="EC" id="5.1.1.1" evidence="1"/>
<dbReference type="EMBL" id="CP000103">
    <property type="protein sequence ID" value="ABB75408.1"/>
    <property type="molecule type" value="Genomic_DNA"/>
</dbReference>
<dbReference type="RefSeq" id="WP_011381417.1">
    <property type="nucleotide sequence ID" value="NC_007614.1"/>
</dbReference>
<dbReference type="SMR" id="Q2Y763"/>
<dbReference type="STRING" id="323848.Nmul_A2115"/>
<dbReference type="KEGG" id="nmu:Nmul_A2115"/>
<dbReference type="eggNOG" id="COG0787">
    <property type="taxonomic scope" value="Bacteria"/>
</dbReference>
<dbReference type="HOGENOM" id="CLU_028393_1_0_4"/>
<dbReference type="OrthoDB" id="9813814at2"/>
<dbReference type="UniPathway" id="UPA00042">
    <property type="reaction ID" value="UER00497"/>
</dbReference>
<dbReference type="Proteomes" id="UP000002718">
    <property type="component" value="Chromosome"/>
</dbReference>
<dbReference type="GO" id="GO:0005829">
    <property type="term" value="C:cytosol"/>
    <property type="evidence" value="ECO:0007669"/>
    <property type="project" value="TreeGrafter"/>
</dbReference>
<dbReference type="GO" id="GO:0008784">
    <property type="term" value="F:alanine racemase activity"/>
    <property type="evidence" value="ECO:0007669"/>
    <property type="project" value="UniProtKB-UniRule"/>
</dbReference>
<dbReference type="GO" id="GO:0030170">
    <property type="term" value="F:pyridoxal phosphate binding"/>
    <property type="evidence" value="ECO:0007669"/>
    <property type="project" value="UniProtKB-UniRule"/>
</dbReference>
<dbReference type="GO" id="GO:0030632">
    <property type="term" value="P:D-alanine biosynthetic process"/>
    <property type="evidence" value="ECO:0007669"/>
    <property type="project" value="UniProtKB-UniRule"/>
</dbReference>
<dbReference type="CDD" id="cd06827">
    <property type="entry name" value="PLPDE_III_AR_proteobact"/>
    <property type="match status" value="1"/>
</dbReference>
<dbReference type="FunFam" id="3.20.20.10:FF:000002">
    <property type="entry name" value="Alanine racemase"/>
    <property type="match status" value="1"/>
</dbReference>
<dbReference type="Gene3D" id="3.20.20.10">
    <property type="entry name" value="Alanine racemase"/>
    <property type="match status" value="1"/>
</dbReference>
<dbReference type="Gene3D" id="2.40.37.10">
    <property type="entry name" value="Lyase, Ornithine Decarboxylase, Chain A, domain 1"/>
    <property type="match status" value="1"/>
</dbReference>
<dbReference type="HAMAP" id="MF_01201">
    <property type="entry name" value="Ala_racemase"/>
    <property type="match status" value="1"/>
</dbReference>
<dbReference type="InterPro" id="IPR000821">
    <property type="entry name" value="Ala_racemase"/>
</dbReference>
<dbReference type="InterPro" id="IPR009006">
    <property type="entry name" value="Ala_racemase/Decarboxylase_C"/>
</dbReference>
<dbReference type="InterPro" id="IPR011079">
    <property type="entry name" value="Ala_racemase_C"/>
</dbReference>
<dbReference type="InterPro" id="IPR001608">
    <property type="entry name" value="Ala_racemase_N"/>
</dbReference>
<dbReference type="InterPro" id="IPR020622">
    <property type="entry name" value="Ala_racemase_pyridoxalP-BS"/>
</dbReference>
<dbReference type="InterPro" id="IPR029066">
    <property type="entry name" value="PLP-binding_barrel"/>
</dbReference>
<dbReference type="NCBIfam" id="TIGR00492">
    <property type="entry name" value="alr"/>
    <property type="match status" value="1"/>
</dbReference>
<dbReference type="PANTHER" id="PTHR30511">
    <property type="entry name" value="ALANINE RACEMASE"/>
    <property type="match status" value="1"/>
</dbReference>
<dbReference type="PANTHER" id="PTHR30511:SF0">
    <property type="entry name" value="ALANINE RACEMASE, CATABOLIC-RELATED"/>
    <property type="match status" value="1"/>
</dbReference>
<dbReference type="Pfam" id="PF00842">
    <property type="entry name" value="Ala_racemase_C"/>
    <property type="match status" value="1"/>
</dbReference>
<dbReference type="Pfam" id="PF01168">
    <property type="entry name" value="Ala_racemase_N"/>
    <property type="match status" value="1"/>
</dbReference>
<dbReference type="PRINTS" id="PR00992">
    <property type="entry name" value="ALARACEMASE"/>
</dbReference>
<dbReference type="SMART" id="SM01005">
    <property type="entry name" value="Ala_racemase_C"/>
    <property type="match status" value="1"/>
</dbReference>
<dbReference type="SUPFAM" id="SSF50621">
    <property type="entry name" value="Alanine racemase C-terminal domain-like"/>
    <property type="match status" value="1"/>
</dbReference>
<dbReference type="SUPFAM" id="SSF51419">
    <property type="entry name" value="PLP-binding barrel"/>
    <property type="match status" value="1"/>
</dbReference>
<dbReference type="PROSITE" id="PS00395">
    <property type="entry name" value="ALANINE_RACEMASE"/>
    <property type="match status" value="1"/>
</dbReference>
<keyword id="KW-0413">Isomerase</keyword>
<keyword id="KW-0663">Pyridoxal phosphate</keyword>
<keyword id="KW-1185">Reference proteome</keyword>
<name>ALR_NITMU</name>
<feature type="chain" id="PRO_1000066019" description="Alanine racemase">
    <location>
        <begin position="1"/>
        <end position="357"/>
    </location>
</feature>
<feature type="active site" description="Proton acceptor; specific for D-alanine" evidence="1">
    <location>
        <position position="35"/>
    </location>
</feature>
<feature type="active site" description="Proton acceptor; specific for L-alanine" evidence="1">
    <location>
        <position position="255"/>
    </location>
</feature>
<feature type="binding site" evidence="1">
    <location>
        <position position="130"/>
    </location>
    <ligand>
        <name>substrate</name>
    </ligand>
</feature>
<feature type="binding site" evidence="1">
    <location>
        <position position="303"/>
    </location>
    <ligand>
        <name>substrate</name>
    </ligand>
</feature>
<feature type="modified residue" description="N6-(pyridoxal phosphate)lysine" evidence="1">
    <location>
        <position position="35"/>
    </location>
</feature>
<protein>
    <recommendedName>
        <fullName evidence="1">Alanine racemase</fullName>
        <ecNumber evidence="1">5.1.1.1</ecNumber>
    </recommendedName>
</protein>
<accession>Q2Y763</accession>
<evidence type="ECO:0000255" key="1">
    <source>
        <dbReference type="HAMAP-Rule" id="MF_01201"/>
    </source>
</evidence>
<organism>
    <name type="scientific">Nitrosospira multiformis (strain ATCC 25196 / NCIMB 11849 / C 71)</name>
    <dbReference type="NCBI Taxonomy" id="323848"/>
    <lineage>
        <taxon>Bacteria</taxon>
        <taxon>Pseudomonadati</taxon>
        <taxon>Pseudomonadota</taxon>
        <taxon>Betaproteobacteria</taxon>
        <taxon>Nitrosomonadales</taxon>
        <taxon>Nitrosomonadaceae</taxon>
        <taxon>Nitrosospira</taxon>
    </lineage>
</organism>
<reference key="1">
    <citation type="submission" date="2005-08" db="EMBL/GenBank/DDBJ databases">
        <title>Complete sequence of chromosome 1 of Nitrosospira multiformis ATCC 25196.</title>
        <authorList>
            <person name="Copeland A."/>
            <person name="Lucas S."/>
            <person name="Lapidus A."/>
            <person name="Barry K."/>
            <person name="Detter J.C."/>
            <person name="Glavina T."/>
            <person name="Hammon N."/>
            <person name="Israni S."/>
            <person name="Pitluck S."/>
            <person name="Chain P."/>
            <person name="Malfatti S."/>
            <person name="Shin M."/>
            <person name="Vergez L."/>
            <person name="Schmutz J."/>
            <person name="Larimer F."/>
            <person name="Land M."/>
            <person name="Hauser L."/>
            <person name="Kyrpides N."/>
            <person name="Lykidis A."/>
            <person name="Richardson P."/>
        </authorList>
    </citation>
    <scope>NUCLEOTIDE SEQUENCE [LARGE SCALE GENOMIC DNA]</scope>
    <source>
        <strain>ATCC 25196 / NCIMB 11849 / C 71</strain>
    </source>
</reference>
<proteinExistence type="inferred from homology"/>